<reference key="1">
    <citation type="submission" date="2001-08" db="EMBL/GenBank/DDBJ databases">
        <title>Molecular cloning of the Zygosaccharomyces bailii imidazoleglycerol-phosphate dehydratase gene.</title>
        <authorList>
            <person name="Branduardi P."/>
            <person name="Sauer M."/>
            <person name="Porro D."/>
        </authorList>
    </citation>
    <scope>NUCLEOTIDE SEQUENCE [MRNA]</scope>
    <source>
        <strain>ATCC 36947</strain>
    </source>
</reference>
<protein>
    <recommendedName>
        <fullName>Imidazoleglycerol-phosphate dehydratase</fullName>
        <shortName>IGPD</shortName>
        <ecNumber>4.2.1.19</ecNumber>
    </recommendedName>
</protein>
<accession>Q96UK2</accession>
<feature type="chain" id="PRO_0000158251" description="Imidazoleglycerol-phosphate dehydratase">
    <location>
        <begin position="1"/>
        <end position="223"/>
    </location>
</feature>
<proteinExistence type="evidence at transcript level"/>
<gene>
    <name type="primary">HIS3</name>
</gene>
<keyword id="KW-0028">Amino-acid biosynthesis</keyword>
<keyword id="KW-0368">Histidine biosynthesis</keyword>
<keyword id="KW-0456">Lyase</keyword>
<dbReference type="EC" id="4.2.1.19"/>
<dbReference type="EMBL" id="AY050224">
    <property type="protein sequence ID" value="AAL02423.1"/>
    <property type="molecule type" value="mRNA"/>
</dbReference>
<dbReference type="SMR" id="Q96UK2"/>
<dbReference type="UniPathway" id="UPA00031">
    <property type="reaction ID" value="UER00011"/>
</dbReference>
<dbReference type="GO" id="GO:0004424">
    <property type="term" value="F:imidazoleglycerol-phosphate dehydratase activity"/>
    <property type="evidence" value="ECO:0007669"/>
    <property type="project" value="UniProtKB-EC"/>
</dbReference>
<dbReference type="GO" id="GO:0000105">
    <property type="term" value="P:L-histidine biosynthetic process"/>
    <property type="evidence" value="ECO:0007669"/>
    <property type="project" value="UniProtKB-UniPathway"/>
</dbReference>
<dbReference type="CDD" id="cd07914">
    <property type="entry name" value="IGPD"/>
    <property type="match status" value="1"/>
</dbReference>
<dbReference type="FunFam" id="3.30.230.40:FF:000005">
    <property type="entry name" value="Imidazoleglycerol-phosphate dehydratase"/>
    <property type="match status" value="1"/>
</dbReference>
<dbReference type="FunFam" id="3.30.230.40:FF:000001">
    <property type="entry name" value="Imidazoleglycerol-phosphate dehydratase HisB"/>
    <property type="match status" value="1"/>
</dbReference>
<dbReference type="Gene3D" id="3.30.230.40">
    <property type="entry name" value="Imidazole glycerol phosphate dehydratase, domain 1"/>
    <property type="match status" value="2"/>
</dbReference>
<dbReference type="HAMAP" id="MF_00076">
    <property type="entry name" value="HisB"/>
    <property type="match status" value="1"/>
</dbReference>
<dbReference type="InterPro" id="IPR038494">
    <property type="entry name" value="IGPD_sf"/>
</dbReference>
<dbReference type="InterPro" id="IPR000807">
    <property type="entry name" value="ImidazoleglycerolP_deHydtase"/>
</dbReference>
<dbReference type="InterPro" id="IPR020565">
    <property type="entry name" value="ImidazoleglycerP_deHydtase_CS"/>
</dbReference>
<dbReference type="InterPro" id="IPR020568">
    <property type="entry name" value="Ribosomal_Su5_D2-typ_SF"/>
</dbReference>
<dbReference type="NCBIfam" id="NF002114">
    <property type="entry name" value="PRK00951.2-4"/>
    <property type="match status" value="1"/>
</dbReference>
<dbReference type="PANTHER" id="PTHR23133:SF2">
    <property type="entry name" value="IMIDAZOLEGLYCEROL-PHOSPHATE DEHYDRATASE"/>
    <property type="match status" value="1"/>
</dbReference>
<dbReference type="PANTHER" id="PTHR23133">
    <property type="entry name" value="IMIDAZOLEGLYCEROL-PHOSPHATE DEHYDRATASE HIS7"/>
    <property type="match status" value="1"/>
</dbReference>
<dbReference type="Pfam" id="PF00475">
    <property type="entry name" value="IGPD"/>
    <property type="match status" value="1"/>
</dbReference>
<dbReference type="SUPFAM" id="SSF54211">
    <property type="entry name" value="Ribosomal protein S5 domain 2-like"/>
    <property type="match status" value="2"/>
</dbReference>
<dbReference type="PROSITE" id="PS00954">
    <property type="entry name" value="IGP_DEHYDRATASE_1"/>
    <property type="match status" value="1"/>
</dbReference>
<dbReference type="PROSITE" id="PS00955">
    <property type="entry name" value="IGP_DEHYDRATASE_2"/>
    <property type="match status" value="1"/>
</dbReference>
<name>HIS7_ZYGBA</name>
<evidence type="ECO:0000305" key="1"/>
<organism>
    <name type="scientific">Zygosaccharomyces bailii</name>
    <dbReference type="NCBI Taxonomy" id="4954"/>
    <lineage>
        <taxon>Eukaryota</taxon>
        <taxon>Fungi</taxon>
        <taxon>Dikarya</taxon>
        <taxon>Ascomycota</taxon>
        <taxon>Saccharomycotina</taxon>
        <taxon>Saccharomycetes</taxon>
        <taxon>Saccharomycetales</taxon>
        <taxon>Saccharomycetaceae</taxon>
        <taxon>Zygosaccharomyces</taxon>
    </lineage>
</organism>
<comment type="catalytic activity">
    <reaction>
        <text>D-erythro-1-(imidazol-4-yl)glycerol 3-phosphate = 3-(imidazol-4-yl)-2-oxopropyl phosphate + H2O</text>
        <dbReference type="Rhea" id="RHEA:11040"/>
        <dbReference type="ChEBI" id="CHEBI:15377"/>
        <dbReference type="ChEBI" id="CHEBI:57766"/>
        <dbReference type="ChEBI" id="CHEBI:58278"/>
        <dbReference type="EC" id="4.2.1.19"/>
    </reaction>
</comment>
<comment type="pathway">
    <text>Amino-acid biosynthesis; L-histidine biosynthesis; L-histidine from 5-phospho-alpha-D-ribose 1-diphosphate: step 6/9.</text>
</comment>
<comment type="similarity">
    <text evidence="1">Belongs to the imidazoleglycerol-phosphate dehydratase family.</text>
</comment>
<sequence length="223" mass="24284">MIGEHKALVQRITNETKIQIAISLNGGHIELPESILDKNPTQENNIATQATTSQVIDIHTGVGFLDHMIHALAKHSGWSLIVECIGDLHIDDHHTTEDCGIALGEAFKQALGQVRGVKRFGCGFAPLDEALSRAVVDLSNRPYAVIDLGLKREKIGDLSCEMIPHFLESFIEAARLTVHIDCLRGFNDHHRSESAFKALAVAIREATAPNGTNDVPSTKGVLM</sequence>